<sequence>MATTTPSRSTRSSMQSPARGTSTPLSPTRISRLQEKEELRHLNDRLAVYIDRVRALELENDRLMVKISEKEEVTTREVSGIKNLYESELADARKVLDETARERARLQIELGKFRSDLDELNKNYKKKDADLSTAQGRIKDLEALFHRSEAELGTALGEKRSLEAEVADLRAQLSKTEDAHRVAKKQLEKETLMRVDFENRMQSLQEEMDFRKNIYEEESRETRKRHERRIVEVDRGHHYDYESKLAQALDELRKQHDEQVKMYKEELEQTYQAKLDNIKRSSDHNDKAANTALEELTERRMRIETLGYQLSGLQKQANAAEERIRELEELLSSDRDKYRKLLDSKEREMAEMRDQMQQQLNEYQELLDVKLALDLEINAYRKLLEGEEERLKLSPSPESRVTVSRATSSSSSATRTSRSKRRRVEEEYEEGGASTGFGAGHSLGSSRITASEGSSRTITSGQSSTTRFHLSQQASATGSISIEEIDLEGKYVHLKNNSDKDQSLGNWRLKRKIGEEEEIVYKFTPKYVLKAGQSVKIYSADAGVAHSPPSILVWKNQSSWGTGSNIRTYLVNTEEEEVAVRTVTKSVLRNVEEEEDEDADFGEEDLFHQQGDPRTTSRGCSVM</sequence>
<dbReference type="EMBL" id="X54099">
    <property type="protein sequence ID" value="CAA38033.1"/>
    <property type="molecule type" value="mRNA"/>
</dbReference>
<dbReference type="PIR" id="A48315">
    <property type="entry name" value="A48315"/>
</dbReference>
<dbReference type="RefSeq" id="NP_001095239.1">
    <property type="nucleotide sequence ID" value="NM_001101769.1"/>
</dbReference>
<dbReference type="SMR" id="P21910"/>
<dbReference type="GeneID" id="397912"/>
<dbReference type="KEGG" id="xla:397912"/>
<dbReference type="AGR" id="Xenbase:XB-GENE-865968"/>
<dbReference type="CTD" id="397912"/>
<dbReference type="Xenbase" id="XB-GENE-865968">
    <property type="gene designation" value="lmnb2.L"/>
</dbReference>
<dbReference type="OrthoDB" id="102442at2759"/>
<dbReference type="Proteomes" id="UP000186698">
    <property type="component" value="Chromosome 1L"/>
</dbReference>
<dbReference type="Bgee" id="397912">
    <property type="expression patterns" value="Expressed in gastrula and 18 other cell types or tissues"/>
</dbReference>
<dbReference type="GO" id="GO:0005882">
    <property type="term" value="C:intermediate filament"/>
    <property type="evidence" value="ECO:0007669"/>
    <property type="project" value="UniProtKB-KW"/>
</dbReference>
<dbReference type="GO" id="GO:0005635">
    <property type="term" value="C:nuclear envelope"/>
    <property type="evidence" value="ECO:0000318"/>
    <property type="project" value="GO_Central"/>
</dbReference>
<dbReference type="GO" id="GO:0005652">
    <property type="term" value="C:nuclear lamina"/>
    <property type="evidence" value="ECO:0000314"/>
    <property type="project" value="UniProtKB"/>
</dbReference>
<dbReference type="GO" id="GO:0016363">
    <property type="term" value="C:nuclear matrix"/>
    <property type="evidence" value="ECO:0007669"/>
    <property type="project" value="UniProtKB-SubCell"/>
</dbReference>
<dbReference type="GO" id="GO:0005654">
    <property type="term" value="C:nucleoplasm"/>
    <property type="evidence" value="ECO:0007669"/>
    <property type="project" value="UniProtKB-SubCell"/>
</dbReference>
<dbReference type="GO" id="GO:0005200">
    <property type="term" value="F:structural constituent of cytoskeleton"/>
    <property type="evidence" value="ECO:0000314"/>
    <property type="project" value="UniProtKB"/>
</dbReference>
<dbReference type="GO" id="GO:0031507">
    <property type="term" value="P:heterochromatin formation"/>
    <property type="evidence" value="ECO:0000318"/>
    <property type="project" value="GO_Central"/>
</dbReference>
<dbReference type="GO" id="GO:0006998">
    <property type="term" value="P:nuclear envelope organization"/>
    <property type="evidence" value="ECO:0000318"/>
    <property type="project" value="GO_Central"/>
</dbReference>
<dbReference type="GO" id="GO:0007097">
    <property type="term" value="P:nuclear migration"/>
    <property type="evidence" value="ECO:0000318"/>
    <property type="project" value="GO_Central"/>
</dbReference>
<dbReference type="GO" id="GO:0051664">
    <property type="term" value="P:nuclear pore localization"/>
    <property type="evidence" value="ECO:0000318"/>
    <property type="project" value="GO_Central"/>
</dbReference>
<dbReference type="GO" id="GO:0090435">
    <property type="term" value="P:protein localization to nuclear envelope"/>
    <property type="evidence" value="ECO:0000318"/>
    <property type="project" value="GO_Central"/>
</dbReference>
<dbReference type="Gene3D" id="1.20.5.170">
    <property type="match status" value="1"/>
</dbReference>
<dbReference type="Gene3D" id="2.60.40.1260">
    <property type="entry name" value="Lamin Tail domain"/>
    <property type="match status" value="1"/>
</dbReference>
<dbReference type="Gene3D" id="1.20.5.1160">
    <property type="entry name" value="Vasodilator-stimulated phosphoprotein"/>
    <property type="match status" value="1"/>
</dbReference>
<dbReference type="InterPro" id="IPR018039">
    <property type="entry name" value="IF_conserved"/>
</dbReference>
<dbReference type="InterPro" id="IPR039008">
    <property type="entry name" value="IF_rod_dom"/>
</dbReference>
<dbReference type="InterPro" id="IPR001322">
    <property type="entry name" value="Lamin_tail_dom"/>
</dbReference>
<dbReference type="InterPro" id="IPR036415">
    <property type="entry name" value="Lamin_tail_dom_sf"/>
</dbReference>
<dbReference type="PANTHER" id="PTHR45721">
    <property type="entry name" value="LAMIN DM0-RELATED"/>
    <property type="match status" value="1"/>
</dbReference>
<dbReference type="PANTHER" id="PTHR45721:SF2">
    <property type="entry name" value="LAMIN-B2"/>
    <property type="match status" value="1"/>
</dbReference>
<dbReference type="Pfam" id="PF00038">
    <property type="entry name" value="Filament"/>
    <property type="match status" value="1"/>
</dbReference>
<dbReference type="Pfam" id="PF00932">
    <property type="entry name" value="LTD"/>
    <property type="match status" value="1"/>
</dbReference>
<dbReference type="SMART" id="SM01391">
    <property type="entry name" value="Filament"/>
    <property type="match status" value="1"/>
</dbReference>
<dbReference type="SUPFAM" id="SSF64593">
    <property type="entry name" value="Intermediate filament protein, coiled coil region"/>
    <property type="match status" value="2"/>
</dbReference>
<dbReference type="SUPFAM" id="SSF74853">
    <property type="entry name" value="Lamin A/C globular tail domain"/>
    <property type="match status" value="1"/>
</dbReference>
<dbReference type="PROSITE" id="PS00226">
    <property type="entry name" value="IF_ROD_1"/>
    <property type="match status" value="1"/>
</dbReference>
<dbReference type="PROSITE" id="PS51842">
    <property type="entry name" value="IF_ROD_2"/>
    <property type="match status" value="1"/>
</dbReference>
<dbReference type="PROSITE" id="PS51841">
    <property type="entry name" value="LTD"/>
    <property type="match status" value="1"/>
</dbReference>
<keyword id="KW-0175">Coiled coil</keyword>
<keyword id="KW-0403">Intermediate filament</keyword>
<keyword id="KW-0449">Lipoprotein</keyword>
<keyword id="KW-0488">Methylation</keyword>
<keyword id="KW-0539">Nucleus</keyword>
<keyword id="KW-0597">Phosphoprotein</keyword>
<keyword id="KW-0636">Prenylation</keyword>
<keyword id="KW-1185">Reference proteome</keyword>
<feature type="chain" id="PRO_0000063824" description="Lamin-B2.L">
    <location>
        <begin position="1"/>
        <end position="620"/>
    </location>
</feature>
<feature type="propeptide" id="PRO_0000396783" description="Removed in mature form" evidence="3">
    <location>
        <begin position="621"/>
        <end position="623"/>
    </location>
</feature>
<feature type="domain" description="IF rod" evidence="6">
    <location>
        <begin position="35"/>
        <end position="391"/>
    </location>
</feature>
<feature type="domain" description="LTD" evidence="5">
    <location>
        <begin position="468"/>
        <end position="585"/>
    </location>
</feature>
<feature type="region of interest" description="Disordered" evidence="7">
    <location>
        <begin position="1"/>
        <end position="30"/>
    </location>
</feature>
<feature type="region of interest" description="Head">
    <location>
        <begin position="2"/>
        <end position="27"/>
    </location>
</feature>
<feature type="region of interest" description="Coil 1A">
    <location>
        <begin position="28"/>
        <end position="64"/>
    </location>
</feature>
<feature type="region of interest" description="Linker 1">
    <location>
        <begin position="64"/>
        <end position="74"/>
    </location>
</feature>
<feature type="region of interest" description="Coil 1B">
    <location>
        <begin position="75"/>
        <end position="211"/>
    </location>
</feature>
<feature type="region of interest" description="Linker 2">
    <location>
        <begin position="212"/>
        <end position="235"/>
    </location>
</feature>
<feature type="region of interest" description="Coil 2">
    <location>
        <begin position="236"/>
        <end position="378"/>
    </location>
</feature>
<feature type="region of interest" description="Tail">
    <location>
        <begin position="380"/>
        <end position="592"/>
    </location>
</feature>
<feature type="region of interest" description="Disordered" evidence="7">
    <location>
        <begin position="388"/>
        <end position="473"/>
    </location>
</feature>
<feature type="region of interest" description="Disordered" evidence="7">
    <location>
        <begin position="591"/>
        <end position="623"/>
    </location>
</feature>
<feature type="short sequence motif" description="Nuclear localization signal" evidence="4">
    <location>
        <begin position="420"/>
        <end position="425"/>
    </location>
</feature>
<feature type="compositionally biased region" description="Low complexity" evidence="7">
    <location>
        <begin position="1"/>
        <end position="18"/>
    </location>
</feature>
<feature type="compositionally biased region" description="Polar residues" evidence="7">
    <location>
        <begin position="19"/>
        <end position="30"/>
    </location>
</feature>
<feature type="compositionally biased region" description="Low complexity" evidence="7">
    <location>
        <begin position="398"/>
        <end position="416"/>
    </location>
</feature>
<feature type="compositionally biased region" description="Polar residues" evidence="7">
    <location>
        <begin position="443"/>
        <end position="473"/>
    </location>
</feature>
<feature type="compositionally biased region" description="Acidic residues" evidence="7">
    <location>
        <begin position="592"/>
        <end position="604"/>
    </location>
</feature>
<feature type="compositionally biased region" description="Polar residues" evidence="7">
    <location>
        <begin position="612"/>
        <end position="623"/>
    </location>
</feature>
<feature type="modified residue" description="Phosphoserine" evidence="2">
    <location>
        <position position="26"/>
    </location>
</feature>
<feature type="modified residue" description="Phosphoserine" evidence="1">
    <location>
        <position position="396"/>
    </location>
</feature>
<feature type="modified residue" description="Cysteine methyl ester" evidence="3">
    <location>
        <position position="620"/>
    </location>
</feature>
<feature type="lipid moiety-binding region" description="S-farnesyl cysteine" evidence="3">
    <location>
        <position position="620"/>
    </location>
</feature>
<proteinExistence type="evidence at transcript level"/>
<reference key="1">
    <citation type="journal article" date="1990" name="Chromosoma">
        <title>Characterization of a second highly conserved B-type lamin present in cells previously thought to contain only a single B-type lamin.</title>
        <authorList>
            <person name="Hoeger T.H."/>
            <person name="Zatloukal K."/>
            <person name="Waizenegger I."/>
            <person name="Krohne G."/>
        </authorList>
    </citation>
    <scope>NUCLEOTIDE SEQUENCE [MRNA]</scope>
</reference>
<reference key="2">
    <citation type="journal article" date="1990" name="Chromosoma">
        <authorList>
            <person name="Hoeger T.H."/>
            <person name="Zatloukal K."/>
            <person name="Waizenegger I."/>
            <person name="Krohne G."/>
        </authorList>
    </citation>
    <scope>ERRATUM OF PUBMED:2102682</scope>
</reference>
<reference key="3">
    <citation type="journal article" date="1986" name="Nature">
        <title>The nuclear lamina is a meshwork of intermediate-type filaments.</title>
        <authorList>
            <person name="Aebi U."/>
            <person name="Cohn J."/>
            <person name="Buhle L."/>
            <person name="Gerace L."/>
        </authorList>
    </citation>
    <scope>FUNCTION</scope>
    <scope>SUBCELLULAR LOCATION</scope>
</reference>
<name>LMNB2_XENLA</name>
<evidence type="ECO:0000250" key="1">
    <source>
        <dbReference type="UniProtKB" id="P02545"/>
    </source>
</evidence>
<evidence type="ECO:0000250" key="2">
    <source>
        <dbReference type="UniProtKB" id="P14732"/>
    </source>
</evidence>
<evidence type="ECO:0000250" key="3">
    <source>
        <dbReference type="UniProtKB" id="P20700"/>
    </source>
</evidence>
<evidence type="ECO:0000255" key="4"/>
<evidence type="ECO:0000255" key="5">
    <source>
        <dbReference type="PROSITE-ProRule" id="PRU01187"/>
    </source>
</evidence>
<evidence type="ECO:0000255" key="6">
    <source>
        <dbReference type="PROSITE-ProRule" id="PRU01188"/>
    </source>
</evidence>
<evidence type="ECO:0000256" key="7">
    <source>
        <dbReference type="SAM" id="MobiDB-lite"/>
    </source>
</evidence>
<evidence type="ECO:0000269" key="8">
    <source>
    </source>
</evidence>
<organism>
    <name type="scientific">Xenopus laevis</name>
    <name type="common">African clawed frog</name>
    <dbReference type="NCBI Taxonomy" id="8355"/>
    <lineage>
        <taxon>Eukaryota</taxon>
        <taxon>Metazoa</taxon>
        <taxon>Chordata</taxon>
        <taxon>Craniata</taxon>
        <taxon>Vertebrata</taxon>
        <taxon>Euteleostomi</taxon>
        <taxon>Amphibia</taxon>
        <taxon>Batrachia</taxon>
        <taxon>Anura</taxon>
        <taxon>Pipoidea</taxon>
        <taxon>Pipidae</taxon>
        <taxon>Xenopodinae</taxon>
        <taxon>Xenopus</taxon>
        <taxon>Xenopus</taxon>
    </lineage>
</organism>
<accession>P21910</accession>
<comment type="function">
    <text evidence="1 8">Lamins are intermediate filament proteins that assemble into a filamentous meshwork, and which constitute the major components of the nuclear lamina, a fibrous layer on the nucleoplasmic side of the inner nuclear membrane (PubMed:3762708). Lamins provide a framework for the nuclear envelope, bridging the nuclear envelope and chromatin, thereby playing an important role in nuclear assembly, chromatin organization, nuclear membrane and telomere dynamics (By similarity). The structural integrity of the lamina is strictly controlled by the cell cycle, as seen by the disintegration and formation of the nuclear envelope in prophase and telophase, respectively (By similarity).</text>
</comment>
<comment type="subcellular location">
    <subcellularLocation>
        <location evidence="8">Nucleus lamina</location>
    </subcellularLocation>
    <subcellularLocation>
        <location evidence="1">Nucleus envelope</location>
    </subcellularLocation>
    <subcellularLocation>
        <location evidence="1">Nucleus</location>
        <location evidence="1">Nucleoplasm</location>
    </subcellularLocation>
    <subcellularLocation>
        <location evidence="1">Nucleus matrix</location>
    </subcellularLocation>
</comment>
<comment type="PTM">
    <text evidence="2">Phosphorylation plays a key role in lamin organization, subcellular localization and nuclear envelope disintegration. Phosphorylation by CDK1 at Ser-26 at the onset of mitosis drives lamin disassembly and nuclear envelope breakdown.</text>
</comment>
<comment type="miscellaneous">
    <text>There are at least five different lamins in Xenopus: the somatic lamins L(I)/lmnb1.S, L(II)/lmnb2.L, and A/lmna.L; the oocyte germinal vesicle lamin L(III)/lmnb3.L; and the male germ cells lamin l(IV).</text>
</comment>
<comment type="similarity">
    <text evidence="6">Belongs to the intermediate filament family.</text>
</comment>
<gene>
    <name type="primary">lmnb2.L</name>
</gene>
<protein>
    <recommendedName>
        <fullName>Lamin-B2.L</fullName>
    </recommendedName>
    <alternativeName>
        <fullName>Lamin-L(II)</fullName>
    </alternativeName>
</protein>